<organism>
    <name type="scientific">Homo sapiens</name>
    <name type="common">Human</name>
    <dbReference type="NCBI Taxonomy" id="9606"/>
    <lineage>
        <taxon>Eukaryota</taxon>
        <taxon>Metazoa</taxon>
        <taxon>Chordata</taxon>
        <taxon>Craniata</taxon>
        <taxon>Vertebrata</taxon>
        <taxon>Euteleostomi</taxon>
        <taxon>Mammalia</taxon>
        <taxon>Eutheria</taxon>
        <taxon>Euarchontoglires</taxon>
        <taxon>Primates</taxon>
        <taxon>Haplorrhini</taxon>
        <taxon>Catarrhini</taxon>
        <taxon>Hominidae</taxon>
        <taxon>Homo</taxon>
    </lineage>
</organism>
<evidence type="ECO:0000250" key="1"/>
<evidence type="ECO:0000250" key="2">
    <source>
        <dbReference type="UniProtKB" id="O09008"/>
    </source>
</evidence>
<evidence type="ECO:0000255" key="3"/>
<evidence type="ECO:0000303" key="4">
    <source>
    </source>
</evidence>
<evidence type="ECO:0000305" key="5"/>
<evidence type="ECO:0000312" key="6">
    <source>
        <dbReference type="HGNC" id="HGNC:7038"/>
    </source>
</evidence>
<protein>
    <recommendedName>
        <fullName evidence="5">Beta-1,3-N-acetylglucosaminyltransferase manic fringe</fullName>
        <ecNumber evidence="2">2.4.1.222</ecNumber>
    </recommendedName>
    <alternativeName>
        <fullName>O-fucosylpeptide 3-beta-N-acetylglucosaminyltransferase</fullName>
    </alternativeName>
</protein>
<sequence>MQCRLPRGLAGALLTLLCMGLLCLRYHLNLSPQRVQGTPELSQPNPGPPKLQLHDVFIAVKTTRAFHRLRLELLLDTWVSRTREQTFVFTDSPDKGLQERLGSHLVVTNCSAEHSHPALSCKMAAEFDTFLASGLRWFCHVDDDNYVNPRALLQLLRAFPLARDVYVGRPSLNRPIHASEPQPHNRTRLVQFWFATGGAGFCINRKLALKMAPWASGSRFMDTSALIRLPDDCTMGYIIECKLGGRLQPSPLFHSHLETLQLLRTAQLPEQVTLSYGVFEGKLNVIKLQGPFSPEEDPSRFRSLHCLLYPDTPWCPQLGAR</sequence>
<reference key="1">
    <citation type="journal article" date="1997" name="Development">
        <title>A family of mammalian Fringe genes implicated in boundary determination and the Notch pathway.</title>
        <authorList>
            <person name="Johnston S.H."/>
            <person name="Rauskolb C."/>
            <person name="Wilson R."/>
            <person name="Prabhakaran B."/>
            <person name="Irvine K.D."/>
            <person name="Vogt T.F."/>
        </authorList>
    </citation>
    <scope>NUCLEOTIDE SEQUENCE [MRNA] (ISOFORM 1)</scope>
</reference>
<reference key="2">
    <citation type="journal article" date="2004" name="Genome Biol.">
        <title>A genome annotation-driven approach to cloning the human ORFeome.</title>
        <authorList>
            <person name="Collins J.E."/>
            <person name="Wright C.L."/>
            <person name="Edwards C.A."/>
            <person name="Davis M.P."/>
            <person name="Grinham J.A."/>
            <person name="Cole C.G."/>
            <person name="Goward M.E."/>
            <person name="Aguado B."/>
            <person name="Mallya M."/>
            <person name="Mokrab Y."/>
            <person name="Huckle E.J."/>
            <person name="Beare D.M."/>
            <person name="Dunham I."/>
        </authorList>
    </citation>
    <scope>NUCLEOTIDE SEQUENCE [LARGE SCALE MRNA] (ISOFORM 1)</scope>
</reference>
<reference key="3">
    <citation type="journal article" date="2004" name="Nat. Genet.">
        <title>Complete sequencing and characterization of 21,243 full-length human cDNAs.</title>
        <authorList>
            <person name="Ota T."/>
            <person name="Suzuki Y."/>
            <person name="Nishikawa T."/>
            <person name="Otsuki T."/>
            <person name="Sugiyama T."/>
            <person name="Irie R."/>
            <person name="Wakamatsu A."/>
            <person name="Hayashi K."/>
            <person name="Sato H."/>
            <person name="Nagai K."/>
            <person name="Kimura K."/>
            <person name="Makita H."/>
            <person name="Sekine M."/>
            <person name="Obayashi M."/>
            <person name="Nishi T."/>
            <person name="Shibahara T."/>
            <person name="Tanaka T."/>
            <person name="Ishii S."/>
            <person name="Yamamoto J."/>
            <person name="Saito K."/>
            <person name="Kawai Y."/>
            <person name="Isono Y."/>
            <person name="Nakamura Y."/>
            <person name="Nagahari K."/>
            <person name="Murakami K."/>
            <person name="Yasuda T."/>
            <person name="Iwayanagi T."/>
            <person name="Wagatsuma M."/>
            <person name="Shiratori A."/>
            <person name="Sudo H."/>
            <person name="Hosoiri T."/>
            <person name="Kaku Y."/>
            <person name="Kodaira H."/>
            <person name="Kondo H."/>
            <person name="Sugawara M."/>
            <person name="Takahashi M."/>
            <person name="Kanda K."/>
            <person name="Yokoi T."/>
            <person name="Furuya T."/>
            <person name="Kikkawa E."/>
            <person name="Omura Y."/>
            <person name="Abe K."/>
            <person name="Kamihara K."/>
            <person name="Katsuta N."/>
            <person name="Sato K."/>
            <person name="Tanikawa M."/>
            <person name="Yamazaki M."/>
            <person name="Ninomiya K."/>
            <person name="Ishibashi T."/>
            <person name="Yamashita H."/>
            <person name="Murakawa K."/>
            <person name="Fujimori K."/>
            <person name="Tanai H."/>
            <person name="Kimata M."/>
            <person name="Watanabe M."/>
            <person name="Hiraoka S."/>
            <person name="Chiba Y."/>
            <person name="Ishida S."/>
            <person name="Ono Y."/>
            <person name="Takiguchi S."/>
            <person name="Watanabe S."/>
            <person name="Yosida M."/>
            <person name="Hotuta T."/>
            <person name="Kusano J."/>
            <person name="Kanehori K."/>
            <person name="Takahashi-Fujii A."/>
            <person name="Hara H."/>
            <person name="Tanase T.-O."/>
            <person name="Nomura Y."/>
            <person name="Togiya S."/>
            <person name="Komai F."/>
            <person name="Hara R."/>
            <person name="Takeuchi K."/>
            <person name="Arita M."/>
            <person name="Imose N."/>
            <person name="Musashino K."/>
            <person name="Yuuki H."/>
            <person name="Oshima A."/>
            <person name="Sasaki N."/>
            <person name="Aotsuka S."/>
            <person name="Yoshikawa Y."/>
            <person name="Matsunawa H."/>
            <person name="Ichihara T."/>
            <person name="Shiohata N."/>
            <person name="Sano S."/>
            <person name="Moriya S."/>
            <person name="Momiyama H."/>
            <person name="Satoh N."/>
            <person name="Takami S."/>
            <person name="Terashima Y."/>
            <person name="Suzuki O."/>
            <person name="Nakagawa S."/>
            <person name="Senoh A."/>
            <person name="Mizoguchi H."/>
            <person name="Goto Y."/>
            <person name="Shimizu F."/>
            <person name="Wakebe H."/>
            <person name="Hishigaki H."/>
            <person name="Watanabe T."/>
            <person name="Sugiyama A."/>
            <person name="Takemoto M."/>
            <person name="Kawakami B."/>
            <person name="Yamazaki M."/>
            <person name="Watanabe K."/>
            <person name="Kumagai A."/>
            <person name="Itakura S."/>
            <person name="Fukuzumi Y."/>
            <person name="Fujimori Y."/>
            <person name="Komiyama M."/>
            <person name="Tashiro H."/>
            <person name="Tanigami A."/>
            <person name="Fujiwara T."/>
            <person name="Ono T."/>
            <person name="Yamada K."/>
            <person name="Fujii Y."/>
            <person name="Ozaki K."/>
            <person name="Hirao M."/>
            <person name="Ohmori Y."/>
            <person name="Kawabata A."/>
            <person name="Hikiji T."/>
            <person name="Kobatake N."/>
            <person name="Inagaki H."/>
            <person name="Ikema Y."/>
            <person name="Okamoto S."/>
            <person name="Okitani R."/>
            <person name="Kawakami T."/>
            <person name="Noguchi S."/>
            <person name="Itoh T."/>
            <person name="Shigeta K."/>
            <person name="Senba T."/>
            <person name="Matsumura K."/>
            <person name="Nakajima Y."/>
            <person name="Mizuno T."/>
            <person name="Morinaga M."/>
            <person name="Sasaki M."/>
            <person name="Togashi T."/>
            <person name="Oyama M."/>
            <person name="Hata H."/>
            <person name="Watanabe M."/>
            <person name="Komatsu T."/>
            <person name="Mizushima-Sugano J."/>
            <person name="Satoh T."/>
            <person name="Shirai Y."/>
            <person name="Takahashi Y."/>
            <person name="Nakagawa K."/>
            <person name="Okumura K."/>
            <person name="Nagase T."/>
            <person name="Nomura N."/>
            <person name="Kikuchi H."/>
            <person name="Masuho Y."/>
            <person name="Yamashita R."/>
            <person name="Nakai K."/>
            <person name="Yada T."/>
            <person name="Nakamura Y."/>
            <person name="Ohara O."/>
            <person name="Isogai T."/>
            <person name="Sugano S."/>
        </authorList>
    </citation>
    <scope>NUCLEOTIDE SEQUENCE [LARGE SCALE MRNA] (ISOFORM 2)</scope>
</reference>
<reference key="4">
    <citation type="journal article" date="1999" name="Nature">
        <title>The DNA sequence of human chromosome 22.</title>
        <authorList>
            <person name="Dunham I."/>
            <person name="Hunt A.R."/>
            <person name="Collins J.E."/>
            <person name="Bruskiewich R."/>
            <person name="Beare D.M."/>
            <person name="Clamp M."/>
            <person name="Smink L.J."/>
            <person name="Ainscough R."/>
            <person name="Almeida J.P."/>
            <person name="Babbage A.K."/>
            <person name="Bagguley C."/>
            <person name="Bailey J."/>
            <person name="Barlow K.F."/>
            <person name="Bates K.N."/>
            <person name="Beasley O.P."/>
            <person name="Bird C.P."/>
            <person name="Blakey S.E."/>
            <person name="Bridgeman A.M."/>
            <person name="Buck D."/>
            <person name="Burgess J."/>
            <person name="Burrill W.D."/>
            <person name="Burton J."/>
            <person name="Carder C."/>
            <person name="Carter N.P."/>
            <person name="Chen Y."/>
            <person name="Clark G."/>
            <person name="Clegg S.M."/>
            <person name="Cobley V.E."/>
            <person name="Cole C.G."/>
            <person name="Collier R.E."/>
            <person name="Connor R."/>
            <person name="Conroy D."/>
            <person name="Corby N.R."/>
            <person name="Coville G.J."/>
            <person name="Cox A.V."/>
            <person name="Davis J."/>
            <person name="Dawson E."/>
            <person name="Dhami P.D."/>
            <person name="Dockree C."/>
            <person name="Dodsworth S.J."/>
            <person name="Durbin R.M."/>
            <person name="Ellington A.G."/>
            <person name="Evans K.L."/>
            <person name="Fey J.M."/>
            <person name="Fleming K."/>
            <person name="French L."/>
            <person name="Garner A.A."/>
            <person name="Gilbert J.G.R."/>
            <person name="Goward M.E."/>
            <person name="Grafham D.V."/>
            <person name="Griffiths M.N.D."/>
            <person name="Hall C."/>
            <person name="Hall R.E."/>
            <person name="Hall-Tamlyn G."/>
            <person name="Heathcott R.W."/>
            <person name="Ho S."/>
            <person name="Holmes S."/>
            <person name="Hunt S.E."/>
            <person name="Jones M.C."/>
            <person name="Kershaw J."/>
            <person name="Kimberley A.M."/>
            <person name="King A."/>
            <person name="Laird G.K."/>
            <person name="Langford C.F."/>
            <person name="Leversha M.A."/>
            <person name="Lloyd C."/>
            <person name="Lloyd D.M."/>
            <person name="Martyn I.D."/>
            <person name="Mashreghi-Mohammadi M."/>
            <person name="Matthews L.H."/>
            <person name="Mccann O.T."/>
            <person name="Mcclay J."/>
            <person name="Mclaren S."/>
            <person name="McMurray A.A."/>
            <person name="Milne S.A."/>
            <person name="Mortimore B.J."/>
            <person name="Odell C.N."/>
            <person name="Pavitt R."/>
            <person name="Pearce A.V."/>
            <person name="Pearson D."/>
            <person name="Phillimore B.J.C.T."/>
            <person name="Phillips S.H."/>
            <person name="Plumb R.W."/>
            <person name="Ramsay H."/>
            <person name="Ramsey Y."/>
            <person name="Rogers L."/>
            <person name="Ross M.T."/>
            <person name="Scott C.E."/>
            <person name="Sehra H.K."/>
            <person name="Skuce C.D."/>
            <person name="Smalley S."/>
            <person name="Smith M.L."/>
            <person name="Soderlund C."/>
            <person name="Spragon L."/>
            <person name="Steward C.A."/>
            <person name="Sulston J.E."/>
            <person name="Swann R.M."/>
            <person name="Vaudin M."/>
            <person name="Wall M."/>
            <person name="Wallis J.M."/>
            <person name="Whiteley M.N."/>
            <person name="Willey D.L."/>
            <person name="Williams L."/>
            <person name="Williams S.A."/>
            <person name="Williamson H."/>
            <person name="Wilmer T.E."/>
            <person name="Wilming L."/>
            <person name="Wright C.L."/>
            <person name="Hubbard T."/>
            <person name="Bentley D.R."/>
            <person name="Beck S."/>
            <person name="Rogers J."/>
            <person name="Shimizu N."/>
            <person name="Minoshima S."/>
            <person name="Kawasaki K."/>
            <person name="Sasaki T."/>
            <person name="Asakawa S."/>
            <person name="Kudoh J."/>
            <person name="Shintani A."/>
            <person name="Shibuya K."/>
            <person name="Yoshizaki Y."/>
            <person name="Aoki N."/>
            <person name="Mitsuyama S."/>
            <person name="Roe B.A."/>
            <person name="Chen F."/>
            <person name="Chu L."/>
            <person name="Crabtree J."/>
            <person name="Deschamps S."/>
            <person name="Do A."/>
            <person name="Do T."/>
            <person name="Dorman A."/>
            <person name="Fang F."/>
            <person name="Fu Y."/>
            <person name="Hu P."/>
            <person name="Hua A."/>
            <person name="Kenton S."/>
            <person name="Lai H."/>
            <person name="Lao H.I."/>
            <person name="Lewis J."/>
            <person name="Lewis S."/>
            <person name="Lin S.-P."/>
            <person name="Loh P."/>
            <person name="Malaj E."/>
            <person name="Nguyen T."/>
            <person name="Pan H."/>
            <person name="Phan S."/>
            <person name="Qi S."/>
            <person name="Qian Y."/>
            <person name="Ray L."/>
            <person name="Ren Q."/>
            <person name="Shaull S."/>
            <person name="Sloan D."/>
            <person name="Song L."/>
            <person name="Wang Q."/>
            <person name="Wang Y."/>
            <person name="Wang Z."/>
            <person name="White J."/>
            <person name="Willingham D."/>
            <person name="Wu H."/>
            <person name="Yao Z."/>
            <person name="Zhan M."/>
            <person name="Zhang G."/>
            <person name="Chissoe S."/>
            <person name="Murray J."/>
            <person name="Miller N."/>
            <person name="Minx P."/>
            <person name="Fulton R."/>
            <person name="Johnson D."/>
            <person name="Bemis G."/>
            <person name="Bentley D."/>
            <person name="Bradshaw H."/>
            <person name="Bourne S."/>
            <person name="Cordes M."/>
            <person name="Du Z."/>
            <person name="Fulton L."/>
            <person name="Goela D."/>
            <person name="Graves T."/>
            <person name="Hawkins J."/>
            <person name="Hinds K."/>
            <person name="Kemp K."/>
            <person name="Latreille P."/>
            <person name="Layman D."/>
            <person name="Ozersky P."/>
            <person name="Rohlfing T."/>
            <person name="Scheet P."/>
            <person name="Walker C."/>
            <person name="Wamsley A."/>
            <person name="Wohldmann P."/>
            <person name="Pepin K."/>
            <person name="Nelson J."/>
            <person name="Korf I."/>
            <person name="Bedell J.A."/>
            <person name="Hillier L.W."/>
            <person name="Mardis E."/>
            <person name="Waterston R."/>
            <person name="Wilson R."/>
            <person name="Emanuel B.S."/>
            <person name="Shaikh T."/>
            <person name="Kurahashi H."/>
            <person name="Saitta S."/>
            <person name="Budarf M.L."/>
            <person name="McDermid H.E."/>
            <person name="Johnson A."/>
            <person name="Wong A.C.C."/>
            <person name="Morrow B.E."/>
            <person name="Edelmann L."/>
            <person name="Kim U.J."/>
            <person name="Shizuya H."/>
            <person name="Simon M.I."/>
            <person name="Dumanski J.P."/>
            <person name="Peyrard M."/>
            <person name="Kedra D."/>
            <person name="Seroussi E."/>
            <person name="Fransson I."/>
            <person name="Tapia I."/>
            <person name="Bruder C.E."/>
            <person name="O'Brien K.P."/>
            <person name="Wilkinson P."/>
            <person name="Bodenteich A."/>
            <person name="Hartman K."/>
            <person name="Hu X."/>
            <person name="Khan A.S."/>
            <person name="Lane L."/>
            <person name="Tilahun Y."/>
            <person name="Wright H."/>
        </authorList>
    </citation>
    <scope>NUCLEOTIDE SEQUENCE [LARGE SCALE GENOMIC DNA]</scope>
</reference>
<reference key="5">
    <citation type="journal article" date="2004" name="Genome Res.">
        <title>The status, quality, and expansion of the NIH full-length cDNA project: the Mammalian Gene Collection (MGC).</title>
        <authorList>
            <consortium name="The MGC Project Team"/>
        </authorList>
    </citation>
    <scope>NUCLEOTIDE SEQUENCE [LARGE SCALE MRNA] (ISOFORM 1)</scope>
    <source>
        <tissue>Lymph</tissue>
    </source>
</reference>
<accession>O00587</accession>
<accession>B4DLT6</accession>
<accession>O43730</accession>
<accession>Q504S9</accession>
<proteinExistence type="evidence at protein level"/>
<dbReference type="EC" id="2.4.1.222" evidence="2"/>
<dbReference type="EMBL" id="U94352">
    <property type="protein sequence ID" value="AAC51358.1"/>
    <property type="molecule type" value="mRNA"/>
</dbReference>
<dbReference type="EMBL" id="CR456518">
    <property type="protein sequence ID" value="CAG30404.1"/>
    <property type="molecule type" value="mRNA"/>
</dbReference>
<dbReference type="EMBL" id="AK297149">
    <property type="protein sequence ID" value="BAG59648.1"/>
    <property type="molecule type" value="mRNA"/>
</dbReference>
<dbReference type="EMBL" id="Z93096">
    <property type="protein sequence ID" value="CAB07511.1"/>
    <property type="molecule type" value="Genomic_DNA"/>
</dbReference>
<dbReference type="EMBL" id="BC094814">
    <property type="protein sequence ID" value="AAH94814.1"/>
    <property type="molecule type" value="mRNA"/>
</dbReference>
<dbReference type="CCDS" id="CCDS13947.1">
    <molecule id="O00587-1"/>
</dbReference>
<dbReference type="CCDS" id="CCDS54525.1">
    <molecule id="O00587-2"/>
</dbReference>
<dbReference type="RefSeq" id="NP_001159815.1">
    <molecule id="O00587-2"/>
    <property type="nucleotide sequence ID" value="NM_001166343.2"/>
</dbReference>
<dbReference type="RefSeq" id="NP_002396.2">
    <molecule id="O00587-1"/>
    <property type="nucleotide sequence ID" value="NM_002405.3"/>
</dbReference>
<dbReference type="SMR" id="O00587"/>
<dbReference type="BioGRID" id="110400">
    <property type="interactions" value="147"/>
</dbReference>
<dbReference type="FunCoup" id="O00587">
    <property type="interactions" value="247"/>
</dbReference>
<dbReference type="IntAct" id="O00587">
    <property type="interactions" value="21"/>
</dbReference>
<dbReference type="STRING" id="9606.ENSP00000349490"/>
<dbReference type="CAZy" id="GT31">
    <property type="family name" value="Glycosyltransferase Family 31"/>
</dbReference>
<dbReference type="GlyCosmos" id="O00587">
    <property type="glycosylation" value="2 sites, No reported glycans"/>
</dbReference>
<dbReference type="GlyGen" id="O00587">
    <property type="glycosylation" value="3 sites"/>
</dbReference>
<dbReference type="iPTMnet" id="O00587"/>
<dbReference type="PhosphoSitePlus" id="O00587"/>
<dbReference type="BioMuta" id="MFNG"/>
<dbReference type="jPOST" id="O00587"/>
<dbReference type="MassIVE" id="O00587"/>
<dbReference type="PaxDb" id="9606-ENSP00000349490"/>
<dbReference type="PeptideAtlas" id="O00587"/>
<dbReference type="ProteomicsDB" id="47988">
    <molecule id="O00587-1"/>
</dbReference>
<dbReference type="ProteomicsDB" id="47989">
    <molecule id="O00587-2"/>
</dbReference>
<dbReference type="Antibodypedia" id="25947">
    <property type="antibodies" value="209 antibodies from 29 providers"/>
</dbReference>
<dbReference type="DNASU" id="4242"/>
<dbReference type="Ensembl" id="ENST00000356998.8">
    <molecule id="O00587-1"/>
    <property type="protein sequence ID" value="ENSP00000349490.3"/>
    <property type="gene ID" value="ENSG00000100060.18"/>
</dbReference>
<dbReference type="Ensembl" id="ENST00000416983.7">
    <molecule id="O00587-2"/>
    <property type="protein sequence ID" value="ENSP00000413855.3"/>
    <property type="gene ID" value="ENSG00000100060.18"/>
</dbReference>
<dbReference type="GeneID" id="4242"/>
<dbReference type="KEGG" id="hsa:4242"/>
<dbReference type="MANE-Select" id="ENST00000356998.8">
    <property type="protein sequence ID" value="ENSP00000349490.3"/>
    <property type="RefSeq nucleotide sequence ID" value="NM_002405.4"/>
    <property type="RefSeq protein sequence ID" value="NP_002396.2"/>
</dbReference>
<dbReference type="UCSC" id="uc003ass.3">
    <molecule id="O00587-1"/>
    <property type="organism name" value="human"/>
</dbReference>
<dbReference type="AGR" id="HGNC:7038"/>
<dbReference type="CTD" id="4242"/>
<dbReference type="GeneCards" id="MFNG"/>
<dbReference type="HGNC" id="HGNC:7038">
    <property type="gene designation" value="MFNG"/>
</dbReference>
<dbReference type="HPA" id="ENSG00000100060">
    <property type="expression patterns" value="Tissue enhanced (lymphoid)"/>
</dbReference>
<dbReference type="MIM" id="602577">
    <property type="type" value="gene"/>
</dbReference>
<dbReference type="neXtProt" id="NX_O00587"/>
<dbReference type="OpenTargets" id="ENSG00000100060"/>
<dbReference type="PharmGKB" id="PA30775"/>
<dbReference type="VEuPathDB" id="HostDB:ENSG00000100060"/>
<dbReference type="eggNOG" id="ENOG502QV30">
    <property type="taxonomic scope" value="Eukaryota"/>
</dbReference>
<dbReference type="GeneTree" id="ENSGT00940000159564"/>
<dbReference type="HOGENOM" id="CLU_056611_0_1_1"/>
<dbReference type="InParanoid" id="O00587"/>
<dbReference type="OMA" id="GSHFVDT"/>
<dbReference type="OrthoDB" id="8959630at2759"/>
<dbReference type="PAN-GO" id="O00587">
    <property type="GO annotations" value="2 GO annotations based on evolutionary models"/>
</dbReference>
<dbReference type="PhylomeDB" id="O00587"/>
<dbReference type="TreeFam" id="TF324207"/>
<dbReference type="BRENDA" id="2.4.1.222">
    <property type="organism ID" value="2681"/>
</dbReference>
<dbReference type="PathwayCommons" id="O00587"/>
<dbReference type="Reactome" id="R-HSA-1912420">
    <property type="pathway name" value="Pre-NOTCH Processing in Golgi"/>
</dbReference>
<dbReference type="SignaLink" id="O00587"/>
<dbReference type="SIGNOR" id="O00587"/>
<dbReference type="BioGRID-ORCS" id="4242">
    <property type="hits" value="20 hits in 1153 CRISPR screens"/>
</dbReference>
<dbReference type="GeneWiki" id="MFNG"/>
<dbReference type="GenomeRNAi" id="4242"/>
<dbReference type="Pharos" id="O00587">
    <property type="development level" value="Tbio"/>
</dbReference>
<dbReference type="PRO" id="PR:O00587"/>
<dbReference type="Proteomes" id="UP000005640">
    <property type="component" value="Chromosome 22"/>
</dbReference>
<dbReference type="RNAct" id="O00587">
    <property type="molecule type" value="protein"/>
</dbReference>
<dbReference type="Bgee" id="ENSG00000100060">
    <property type="expression patterns" value="Expressed in granulocyte and 167 other cell types or tissues"/>
</dbReference>
<dbReference type="ExpressionAtlas" id="O00587">
    <property type="expression patterns" value="baseline and differential"/>
</dbReference>
<dbReference type="GO" id="GO:0005615">
    <property type="term" value="C:extracellular space"/>
    <property type="evidence" value="ECO:0000304"/>
    <property type="project" value="ProtInc"/>
</dbReference>
<dbReference type="GO" id="GO:0000139">
    <property type="term" value="C:Golgi membrane"/>
    <property type="evidence" value="ECO:0007669"/>
    <property type="project" value="UniProtKB-SubCell"/>
</dbReference>
<dbReference type="GO" id="GO:0046872">
    <property type="term" value="F:metal ion binding"/>
    <property type="evidence" value="ECO:0007669"/>
    <property type="project" value="UniProtKB-KW"/>
</dbReference>
<dbReference type="GO" id="GO:0033829">
    <property type="term" value="F:O-fucosylpeptide 3-beta-N-acetylglucosaminyltransferase activity"/>
    <property type="evidence" value="ECO:0000314"/>
    <property type="project" value="FlyBase"/>
</dbReference>
<dbReference type="GO" id="GO:0001825">
    <property type="term" value="P:blastocyst formation"/>
    <property type="evidence" value="ECO:0007669"/>
    <property type="project" value="Ensembl"/>
</dbReference>
<dbReference type="GO" id="GO:0002315">
    <property type="term" value="P:marginal zone B cell differentiation"/>
    <property type="evidence" value="ECO:0000250"/>
    <property type="project" value="UniProtKB"/>
</dbReference>
<dbReference type="GO" id="GO:0007389">
    <property type="term" value="P:pattern specification process"/>
    <property type="evidence" value="ECO:0000304"/>
    <property type="project" value="ProtInc"/>
</dbReference>
<dbReference type="GO" id="GO:0045747">
    <property type="term" value="P:positive regulation of Notch signaling pathway"/>
    <property type="evidence" value="ECO:0007669"/>
    <property type="project" value="Ensembl"/>
</dbReference>
<dbReference type="GO" id="GO:0008593">
    <property type="term" value="P:regulation of Notch signaling pathway"/>
    <property type="evidence" value="ECO:0000250"/>
    <property type="project" value="UniProtKB"/>
</dbReference>
<dbReference type="FunFam" id="3.90.550.50:FF:000003">
    <property type="entry name" value="Beta-1,3-N-acetylglucosaminyltransferase"/>
    <property type="match status" value="1"/>
</dbReference>
<dbReference type="Gene3D" id="3.90.550.50">
    <property type="match status" value="1"/>
</dbReference>
<dbReference type="InterPro" id="IPR017374">
    <property type="entry name" value="Fringe"/>
</dbReference>
<dbReference type="InterPro" id="IPR003378">
    <property type="entry name" value="Fringe-like_glycosylTrfase"/>
</dbReference>
<dbReference type="PANTHER" id="PTHR10811">
    <property type="entry name" value="FRINGE-RELATED"/>
    <property type="match status" value="1"/>
</dbReference>
<dbReference type="Pfam" id="PF02434">
    <property type="entry name" value="Fringe"/>
    <property type="match status" value="1"/>
</dbReference>
<dbReference type="PIRSF" id="PIRSF038073">
    <property type="entry name" value="B-acetylgalactosaminyltfrase"/>
    <property type="match status" value="1"/>
</dbReference>
<gene>
    <name evidence="6" type="primary">MFNG</name>
</gene>
<feature type="chain" id="PRO_0000219182" description="Beta-1,3-N-acetylglucosaminyltransferase manic fringe">
    <location>
        <begin position="1"/>
        <end position="321"/>
    </location>
</feature>
<feature type="topological domain" description="Cytoplasmic" evidence="3">
    <location>
        <begin position="1"/>
        <end position="7"/>
    </location>
</feature>
<feature type="transmembrane region" description="Helical; Signal-anchor for type II membrane protein" evidence="3">
    <location>
        <begin position="8"/>
        <end position="27"/>
    </location>
</feature>
<feature type="topological domain" description="Lumenal" evidence="3">
    <location>
        <begin position="28"/>
        <end position="321"/>
    </location>
</feature>
<feature type="active site" evidence="1">
    <location>
        <position position="232"/>
    </location>
</feature>
<feature type="binding site" evidence="1">
    <location>
        <position position="70"/>
    </location>
    <ligand>
        <name>substrate</name>
    </ligand>
</feature>
<feature type="binding site" evidence="1">
    <location>
        <position position="143"/>
    </location>
    <ligand>
        <name>substrate</name>
    </ligand>
</feature>
<feature type="binding site" evidence="1">
    <location>
        <position position="144"/>
    </location>
    <ligand>
        <name>Mn(2+)</name>
        <dbReference type="ChEBI" id="CHEBI:29035"/>
    </ligand>
</feature>
<feature type="binding site" evidence="1">
    <location>
        <position position="256"/>
    </location>
    <ligand>
        <name>Mn(2+)</name>
        <dbReference type="ChEBI" id="CHEBI:29035"/>
    </ligand>
</feature>
<feature type="glycosylation site" description="N-linked (GlcNAc...) asparagine" evidence="3">
    <location>
        <position position="109"/>
    </location>
</feature>
<feature type="glycosylation site" description="N-linked (GlcNAc...) asparagine" evidence="3">
    <location>
        <position position="185"/>
    </location>
</feature>
<feature type="disulfide bond" evidence="1">
    <location>
        <begin position="110"/>
        <end position="121"/>
    </location>
</feature>
<feature type="disulfide bond" evidence="1">
    <location>
        <begin position="139"/>
        <end position="202"/>
    </location>
</feature>
<feature type="disulfide bond" evidence="1">
    <location>
        <begin position="306"/>
        <end position="315"/>
    </location>
</feature>
<feature type="splice variant" id="VSP_042857" description="In isoform 2." evidence="4">
    <original>TFVFTDSPDKGLQERLG</original>
    <variation>VTR</variation>
    <location>
        <begin position="86"/>
        <end position="102"/>
    </location>
</feature>
<feature type="sequence variant" id="VAR_024467" description="In dbSNP:rs8192548.">
    <original>R</original>
    <variation>C</variation>
    <location>
        <position position="302"/>
    </location>
</feature>
<feature type="sequence conflict" description="In Ref. 1; AAC51358." evidence="5" ref="1">
    <original>Q</original>
    <variation>L</variation>
    <location>
        <position position="85"/>
    </location>
</feature>
<comment type="function">
    <text evidence="2">Glycosyltransferase that initiates the elongation of O-linked fucose residues attached to EGF-like repeats in the extracellular domain of Notch molecules (By similarity). Modulates NOTCH1 activity by modifying O-fucose residues at specific EGF-like domains resulting in inhibition of NOTCH1 activation by JAG1 and enhancement of NOTCH1 activation by DLL1 via an increase in its binding to DLL1 (By similarity).</text>
</comment>
<comment type="catalytic activity">
    <reaction evidence="2">
        <text>3-O-(alpha-L-fucosyl)-L-threonyl-[EGF-like domain protein] + UDP-N-acetyl-alpha-D-glucosamine = 3-O-(N-acetyl-beta-D-glucosaminyl-(1-&gt;3)-alpha-L-fucosyl)-L-threonyl-[EGF-like domain protein] + UDP + H(+)</text>
        <dbReference type="Rhea" id="RHEA:70531"/>
        <dbReference type="Rhea" id="RHEA-COMP:17922"/>
        <dbReference type="Rhea" id="RHEA-COMP:17923"/>
        <dbReference type="ChEBI" id="CHEBI:15378"/>
        <dbReference type="ChEBI" id="CHEBI:57705"/>
        <dbReference type="ChEBI" id="CHEBI:58223"/>
        <dbReference type="ChEBI" id="CHEBI:189631"/>
        <dbReference type="ChEBI" id="CHEBI:189634"/>
        <dbReference type="EC" id="2.4.1.222"/>
    </reaction>
</comment>
<comment type="catalytic activity">
    <reaction evidence="2">
        <text>3-O-(alpha-L-fucosyl)-L-seryl-[EGF-like domain protein] + UDP-N-acetyl-alpha-D-glucosamine = 3-O-(N-acetyl-beta-D-glucosaminyl-(1-&gt;3)-alpha-L-fucosyl)-L-seryl-[EGF-like domain protein] + UDP + H(+)</text>
        <dbReference type="Rhea" id="RHEA:70511"/>
        <dbReference type="Rhea" id="RHEA-COMP:17919"/>
        <dbReference type="Rhea" id="RHEA-COMP:17920"/>
        <dbReference type="ChEBI" id="CHEBI:15378"/>
        <dbReference type="ChEBI" id="CHEBI:57705"/>
        <dbReference type="ChEBI" id="CHEBI:58223"/>
        <dbReference type="ChEBI" id="CHEBI:189632"/>
        <dbReference type="ChEBI" id="CHEBI:189633"/>
        <dbReference type="EC" id="2.4.1.222"/>
    </reaction>
</comment>
<comment type="cofactor">
    <cofactor evidence="2">
        <name>Mn(2+)</name>
        <dbReference type="ChEBI" id="CHEBI:29035"/>
    </cofactor>
    <text evidence="2">Has some activity with cobalt, magnesium and calcium, but not zinc.</text>
</comment>
<comment type="subcellular location">
    <subcellularLocation>
        <location evidence="1">Golgi apparatus membrane</location>
        <topology evidence="1">Single-pass type II membrane protein</topology>
    </subcellularLocation>
</comment>
<comment type="alternative products">
    <event type="alternative splicing"/>
    <isoform>
        <id>O00587-1</id>
        <name>1</name>
        <sequence type="displayed"/>
    </isoform>
    <isoform>
        <id>O00587-2</id>
        <name>2</name>
        <sequence type="described" ref="VSP_042857"/>
    </isoform>
</comment>
<comment type="similarity">
    <text evidence="5">Belongs to the glycosyltransferase 31 family.</text>
</comment>
<comment type="online information" name="Functional Glycomics Gateway - GTase">
    <link uri="http://www.functionalglycomics.org/glycomics/molecule/jsp/glycoEnzyme/viewGlycoEnzyme.jsp?gbpId=gt_hum_552"/>
    <text>Beta-1,3-N-acetylglucosaminyltransferase manic fringe</text>
</comment>
<keyword id="KW-0025">Alternative splicing</keyword>
<keyword id="KW-0217">Developmental protein</keyword>
<keyword id="KW-1015">Disulfide bond</keyword>
<keyword id="KW-0325">Glycoprotein</keyword>
<keyword id="KW-0328">Glycosyltransferase</keyword>
<keyword id="KW-0333">Golgi apparatus</keyword>
<keyword id="KW-0464">Manganese</keyword>
<keyword id="KW-0472">Membrane</keyword>
<keyword id="KW-0479">Metal-binding</keyword>
<keyword id="KW-1267">Proteomics identification</keyword>
<keyword id="KW-1185">Reference proteome</keyword>
<keyword id="KW-0735">Signal-anchor</keyword>
<keyword id="KW-0808">Transferase</keyword>
<keyword id="KW-0812">Transmembrane</keyword>
<keyword id="KW-1133">Transmembrane helix</keyword>
<name>MFNG_HUMAN</name>